<keyword id="KW-0007">Acetylation</keyword>
<keyword id="KW-0025">Alternative splicing</keyword>
<keyword id="KW-0036">Amyotrophic lateral sclerosis</keyword>
<keyword id="KW-0963">Cytoplasm</keyword>
<keyword id="KW-0206">Cytoskeleton</keyword>
<keyword id="KW-0903">Direct protein sequencing</keyword>
<keyword id="KW-0342">GTP-binding</keyword>
<keyword id="KW-0378">Hydrolase</keyword>
<keyword id="KW-0460">Magnesium</keyword>
<keyword id="KW-0479">Metal-binding</keyword>
<keyword id="KW-0488">Methylation</keyword>
<keyword id="KW-0493">Microtubule</keyword>
<keyword id="KW-0523">Neurodegeneration</keyword>
<keyword id="KW-0944">Nitration</keyword>
<keyword id="KW-0547">Nucleotide-binding</keyword>
<keyword id="KW-0597">Phosphoprotein</keyword>
<keyword id="KW-1267">Proteomics identification</keyword>
<keyword id="KW-1185">Reference proteome</keyword>
<proteinExistence type="evidence at protein level"/>
<organism>
    <name type="scientific">Homo sapiens</name>
    <name type="common">Human</name>
    <dbReference type="NCBI Taxonomy" id="9606"/>
    <lineage>
        <taxon>Eukaryota</taxon>
        <taxon>Metazoa</taxon>
        <taxon>Chordata</taxon>
        <taxon>Craniata</taxon>
        <taxon>Vertebrata</taxon>
        <taxon>Euteleostomi</taxon>
        <taxon>Mammalia</taxon>
        <taxon>Eutheria</taxon>
        <taxon>Euarchontoglires</taxon>
        <taxon>Primates</taxon>
        <taxon>Haplorrhini</taxon>
        <taxon>Catarrhini</taxon>
        <taxon>Hominidae</taxon>
        <taxon>Homo</taxon>
    </lineage>
</organism>
<protein>
    <recommendedName>
        <fullName>Tubulin alpha-4A chain</fullName>
        <ecNumber evidence="2">3.6.5.-</ecNumber>
    </recommendedName>
    <alternativeName>
        <fullName>Alpha-tubulin 1</fullName>
    </alternativeName>
    <alternativeName>
        <fullName>Testis-specific alpha-tubulin</fullName>
    </alternativeName>
    <alternativeName>
        <fullName>Tubulin H2-alpha</fullName>
    </alternativeName>
    <alternativeName>
        <fullName>Tubulin alpha-1 chain</fullName>
    </alternativeName>
</protein>
<reference key="1">
    <citation type="journal article" date="1987" name="Nucleic Acids Res.">
        <title>Alternative 5' exons either provide or deny an initiator methionine codon to the same alpha-tubulin coding region.</title>
        <authorList>
            <person name="Dobner P.R."/>
            <person name="Kislauskis E."/>
            <person name="Wentworth B.M."/>
            <person name="Villa-Komaroff L."/>
        </authorList>
    </citation>
    <scope>NUCLEOTIDE SEQUENCE [GENOMIC DNA]</scope>
</reference>
<reference key="2">
    <citation type="submission" date="2003-05" db="EMBL/GenBank/DDBJ databases">
        <title>Cloning of human full-length CDSs in BD Creator(TM) system donor vector.</title>
        <authorList>
            <person name="Kalnine N."/>
            <person name="Chen X."/>
            <person name="Rolfs A."/>
            <person name="Halleck A."/>
            <person name="Hines L."/>
            <person name="Eisenstein S."/>
            <person name="Koundinya M."/>
            <person name="Raphael J."/>
            <person name="Moreira D."/>
            <person name="Kelley T."/>
            <person name="LaBaer J."/>
            <person name="Lin Y."/>
            <person name="Phelan M."/>
            <person name="Farmer A."/>
        </authorList>
    </citation>
    <scope>NUCLEOTIDE SEQUENCE [LARGE SCALE MRNA] (ISOFORM 1)</scope>
</reference>
<reference key="3">
    <citation type="journal article" date="2004" name="Nat. Genet.">
        <title>Complete sequencing and characterization of 21,243 full-length human cDNAs.</title>
        <authorList>
            <person name="Ota T."/>
            <person name="Suzuki Y."/>
            <person name="Nishikawa T."/>
            <person name="Otsuki T."/>
            <person name="Sugiyama T."/>
            <person name="Irie R."/>
            <person name="Wakamatsu A."/>
            <person name="Hayashi K."/>
            <person name="Sato H."/>
            <person name="Nagai K."/>
            <person name="Kimura K."/>
            <person name="Makita H."/>
            <person name="Sekine M."/>
            <person name="Obayashi M."/>
            <person name="Nishi T."/>
            <person name="Shibahara T."/>
            <person name="Tanaka T."/>
            <person name="Ishii S."/>
            <person name="Yamamoto J."/>
            <person name="Saito K."/>
            <person name="Kawai Y."/>
            <person name="Isono Y."/>
            <person name="Nakamura Y."/>
            <person name="Nagahari K."/>
            <person name="Murakami K."/>
            <person name="Yasuda T."/>
            <person name="Iwayanagi T."/>
            <person name="Wagatsuma M."/>
            <person name="Shiratori A."/>
            <person name="Sudo H."/>
            <person name="Hosoiri T."/>
            <person name="Kaku Y."/>
            <person name="Kodaira H."/>
            <person name="Kondo H."/>
            <person name="Sugawara M."/>
            <person name="Takahashi M."/>
            <person name="Kanda K."/>
            <person name="Yokoi T."/>
            <person name="Furuya T."/>
            <person name="Kikkawa E."/>
            <person name="Omura Y."/>
            <person name="Abe K."/>
            <person name="Kamihara K."/>
            <person name="Katsuta N."/>
            <person name="Sato K."/>
            <person name="Tanikawa M."/>
            <person name="Yamazaki M."/>
            <person name="Ninomiya K."/>
            <person name="Ishibashi T."/>
            <person name="Yamashita H."/>
            <person name="Murakawa K."/>
            <person name="Fujimori K."/>
            <person name="Tanai H."/>
            <person name="Kimata M."/>
            <person name="Watanabe M."/>
            <person name="Hiraoka S."/>
            <person name="Chiba Y."/>
            <person name="Ishida S."/>
            <person name="Ono Y."/>
            <person name="Takiguchi S."/>
            <person name="Watanabe S."/>
            <person name="Yosida M."/>
            <person name="Hotuta T."/>
            <person name="Kusano J."/>
            <person name="Kanehori K."/>
            <person name="Takahashi-Fujii A."/>
            <person name="Hara H."/>
            <person name="Tanase T.-O."/>
            <person name="Nomura Y."/>
            <person name="Togiya S."/>
            <person name="Komai F."/>
            <person name="Hara R."/>
            <person name="Takeuchi K."/>
            <person name="Arita M."/>
            <person name="Imose N."/>
            <person name="Musashino K."/>
            <person name="Yuuki H."/>
            <person name="Oshima A."/>
            <person name="Sasaki N."/>
            <person name="Aotsuka S."/>
            <person name="Yoshikawa Y."/>
            <person name="Matsunawa H."/>
            <person name="Ichihara T."/>
            <person name="Shiohata N."/>
            <person name="Sano S."/>
            <person name="Moriya S."/>
            <person name="Momiyama H."/>
            <person name="Satoh N."/>
            <person name="Takami S."/>
            <person name="Terashima Y."/>
            <person name="Suzuki O."/>
            <person name="Nakagawa S."/>
            <person name="Senoh A."/>
            <person name="Mizoguchi H."/>
            <person name="Goto Y."/>
            <person name="Shimizu F."/>
            <person name="Wakebe H."/>
            <person name="Hishigaki H."/>
            <person name="Watanabe T."/>
            <person name="Sugiyama A."/>
            <person name="Takemoto M."/>
            <person name="Kawakami B."/>
            <person name="Yamazaki M."/>
            <person name="Watanabe K."/>
            <person name="Kumagai A."/>
            <person name="Itakura S."/>
            <person name="Fukuzumi Y."/>
            <person name="Fujimori Y."/>
            <person name="Komiyama M."/>
            <person name="Tashiro H."/>
            <person name="Tanigami A."/>
            <person name="Fujiwara T."/>
            <person name="Ono T."/>
            <person name="Yamada K."/>
            <person name="Fujii Y."/>
            <person name="Ozaki K."/>
            <person name="Hirao M."/>
            <person name="Ohmori Y."/>
            <person name="Kawabata A."/>
            <person name="Hikiji T."/>
            <person name="Kobatake N."/>
            <person name="Inagaki H."/>
            <person name="Ikema Y."/>
            <person name="Okamoto S."/>
            <person name="Okitani R."/>
            <person name="Kawakami T."/>
            <person name="Noguchi S."/>
            <person name="Itoh T."/>
            <person name="Shigeta K."/>
            <person name="Senba T."/>
            <person name="Matsumura K."/>
            <person name="Nakajima Y."/>
            <person name="Mizuno T."/>
            <person name="Morinaga M."/>
            <person name="Sasaki M."/>
            <person name="Togashi T."/>
            <person name="Oyama M."/>
            <person name="Hata H."/>
            <person name="Watanabe M."/>
            <person name="Komatsu T."/>
            <person name="Mizushima-Sugano J."/>
            <person name="Satoh T."/>
            <person name="Shirai Y."/>
            <person name="Takahashi Y."/>
            <person name="Nakagawa K."/>
            <person name="Okumura K."/>
            <person name="Nagase T."/>
            <person name="Nomura N."/>
            <person name="Kikuchi H."/>
            <person name="Masuho Y."/>
            <person name="Yamashita R."/>
            <person name="Nakai K."/>
            <person name="Yada T."/>
            <person name="Nakamura Y."/>
            <person name="Ohara O."/>
            <person name="Isogai T."/>
            <person name="Sugano S."/>
        </authorList>
    </citation>
    <scope>NUCLEOTIDE SEQUENCE [LARGE SCALE MRNA] (ISOFORMS 1 AND 2)</scope>
    <source>
        <tissue>Cerebellum</tissue>
    </source>
</reference>
<reference key="4">
    <citation type="submission" date="2005-01" db="EMBL/GenBank/DDBJ databases">
        <authorList>
            <consortium name="NIEHS SNPs program"/>
        </authorList>
    </citation>
    <scope>NUCLEOTIDE SEQUENCE [GENOMIC DNA]</scope>
</reference>
<reference key="5">
    <citation type="journal article" date="2005" name="Nature">
        <title>Generation and annotation of the DNA sequences of human chromosomes 2 and 4.</title>
        <authorList>
            <person name="Hillier L.W."/>
            <person name="Graves T.A."/>
            <person name="Fulton R.S."/>
            <person name="Fulton L.A."/>
            <person name="Pepin K.H."/>
            <person name="Minx P."/>
            <person name="Wagner-McPherson C."/>
            <person name="Layman D."/>
            <person name="Wylie K."/>
            <person name="Sekhon M."/>
            <person name="Becker M.C."/>
            <person name="Fewell G.A."/>
            <person name="Delehaunty K.D."/>
            <person name="Miner T.L."/>
            <person name="Nash W.E."/>
            <person name="Kremitzki C."/>
            <person name="Oddy L."/>
            <person name="Du H."/>
            <person name="Sun H."/>
            <person name="Bradshaw-Cordum H."/>
            <person name="Ali J."/>
            <person name="Carter J."/>
            <person name="Cordes M."/>
            <person name="Harris A."/>
            <person name="Isak A."/>
            <person name="van Brunt A."/>
            <person name="Nguyen C."/>
            <person name="Du F."/>
            <person name="Courtney L."/>
            <person name="Kalicki J."/>
            <person name="Ozersky P."/>
            <person name="Abbott S."/>
            <person name="Armstrong J."/>
            <person name="Belter E.A."/>
            <person name="Caruso L."/>
            <person name="Cedroni M."/>
            <person name="Cotton M."/>
            <person name="Davidson T."/>
            <person name="Desai A."/>
            <person name="Elliott G."/>
            <person name="Erb T."/>
            <person name="Fronick C."/>
            <person name="Gaige T."/>
            <person name="Haakenson W."/>
            <person name="Haglund K."/>
            <person name="Holmes A."/>
            <person name="Harkins R."/>
            <person name="Kim K."/>
            <person name="Kruchowski S.S."/>
            <person name="Strong C.M."/>
            <person name="Grewal N."/>
            <person name="Goyea E."/>
            <person name="Hou S."/>
            <person name="Levy A."/>
            <person name="Martinka S."/>
            <person name="Mead K."/>
            <person name="McLellan M.D."/>
            <person name="Meyer R."/>
            <person name="Randall-Maher J."/>
            <person name="Tomlinson C."/>
            <person name="Dauphin-Kohlberg S."/>
            <person name="Kozlowicz-Reilly A."/>
            <person name="Shah N."/>
            <person name="Swearengen-Shahid S."/>
            <person name="Snider J."/>
            <person name="Strong J.T."/>
            <person name="Thompson J."/>
            <person name="Yoakum M."/>
            <person name="Leonard S."/>
            <person name="Pearman C."/>
            <person name="Trani L."/>
            <person name="Radionenko M."/>
            <person name="Waligorski J.E."/>
            <person name="Wang C."/>
            <person name="Rock S.M."/>
            <person name="Tin-Wollam A.-M."/>
            <person name="Maupin R."/>
            <person name="Latreille P."/>
            <person name="Wendl M.C."/>
            <person name="Yang S.-P."/>
            <person name="Pohl C."/>
            <person name="Wallis J.W."/>
            <person name="Spieth J."/>
            <person name="Bieri T.A."/>
            <person name="Berkowicz N."/>
            <person name="Nelson J.O."/>
            <person name="Osborne J."/>
            <person name="Ding L."/>
            <person name="Meyer R."/>
            <person name="Sabo A."/>
            <person name="Shotland Y."/>
            <person name="Sinha P."/>
            <person name="Wohldmann P.E."/>
            <person name="Cook L.L."/>
            <person name="Hickenbotham M.T."/>
            <person name="Eldred J."/>
            <person name="Williams D."/>
            <person name="Jones T.A."/>
            <person name="She X."/>
            <person name="Ciccarelli F.D."/>
            <person name="Izaurralde E."/>
            <person name="Taylor J."/>
            <person name="Schmutz J."/>
            <person name="Myers R.M."/>
            <person name="Cox D.R."/>
            <person name="Huang X."/>
            <person name="McPherson J.D."/>
            <person name="Mardis E.R."/>
            <person name="Clifton S.W."/>
            <person name="Warren W.C."/>
            <person name="Chinwalla A.T."/>
            <person name="Eddy S.R."/>
            <person name="Marra M.A."/>
            <person name="Ovcharenko I."/>
            <person name="Furey T.S."/>
            <person name="Miller W."/>
            <person name="Eichler E.E."/>
            <person name="Bork P."/>
            <person name="Suyama M."/>
            <person name="Torrents D."/>
            <person name="Waterston R.H."/>
            <person name="Wilson R.K."/>
        </authorList>
    </citation>
    <scope>NUCLEOTIDE SEQUENCE [LARGE SCALE GENOMIC DNA]</scope>
</reference>
<reference key="6">
    <citation type="submission" date="2005-07" db="EMBL/GenBank/DDBJ databases">
        <authorList>
            <person name="Mural R.J."/>
            <person name="Istrail S."/>
            <person name="Sutton G.G."/>
            <person name="Florea L."/>
            <person name="Halpern A.L."/>
            <person name="Mobarry C.M."/>
            <person name="Lippert R."/>
            <person name="Walenz B."/>
            <person name="Shatkay H."/>
            <person name="Dew I."/>
            <person name="Miller J.R."/>
            <person name="Flanigan M.J."/>
            <person name="Edwards N.J."/>
            <person name="Bolanos R."/>
            <person name="Fasulo D."/>
            <person name="Halldorsson B.V."/>
            <person name="Hannenhalli S."/>
            <person name="Turner R."/>
            <person name="Yooseph S."/>
            <person name="Lu F."/>
            <person name="Nusskern D.R."/>
            <person name="Shue B.C."/>
            <person name="Zheng X.H."/>
            <person name="Zhong F."/>
            <person name="Delcher A.L."/>
            <person name="Huson D.H."/>
            <person name="Kravitz S.A."/>
            <person name="Mouchard L."/>
            <person name="Reinert K."/>
            <person name="Remington K.A."/>
            <person name="Clark A.G."/>
            <person name="Waterman M.S."/>
            <person name="Eichler E.E."/>
            <person name="Adams M.D."/>
            <person name="Hunkapiller M.W."/>
            <person name="Myers E.W."/>
            <person name="Venter J.C."/>
        </authorList>
    </citation>
    <scope>NUCLEOTIDE SEQUENCE [LARGE SCALE GENOMIC DNA]</scope>
</reference>
<reference key="7">
    <citation type="journal article" date="2004" name="Genome Res.">
        <title>The status, quality, and expansion of the NIH full-length cDNA project: the Mammalian Gene Collection (MGC).</title>
        <authorList>
            <consortium name="The MGC Project Team"/>
        </authorList>
    </citation>
    <scope>NUCLEOTIDE SEQUENCE [LARGE SCALE MRNA] (ISOFORM 1)</scope>
    <source>
        <tissue>Lung</tissue>
    </source>
</reference>
<reference key="8">
    <citation type="submission" date="2005-11" db="UniProtKB">
        <authorList>
            <person name="Bienvenut W.V."/>
            <person name="Claeys D."/>
        </authorList>
    </citation>
    <scope>PROTEIN SEQUENCE OF 41-60; 65-79; 85-121; 157-164; 216-280; 327-336; 340-370; 391-401 AND 403-430</scope>
    <scope>IDENTIFICATION BY MASS SPECTROMETRY</scope>
    <source>
        <tissue>Platelet</tissue>
    </source>
</reference>
<reference key="9">
    <citation type="journal article" date="2003" name="Nature">
        <title>Proteomic characterization of the human centrosome by protein correlation profiling.</title>
        <authorList>
            <person name="Andersen J.S."/>
            <person name="Wilkinson C.J."/>
            <person name="Mayor T."/>
            <person name="Mortensen P."/>
            <person name="Nigg E.A."/>
            <person name="Mann M."/>
        </authorList>
    </citation>
    <scope>IDENTIFICATION BY MASS SPECTROMETRY</scope>
    <source>
        <tissue>Lymphoblast</tissue>
    </source>
</reference>
<reference key="10">
    <citation type="journal article" date="2008" name="J. Proteome Res.">
        <title>Phosphoproteome of resting human platelets.</title>
        <authorList>
            <person name="Zahedi R.P."/>
            <person name="Lewandrowski U."/>
            <person name="Wiesner J."/>
            <person name="Wortelkamp S."/>
            <person name="Moebius J."/>
            <person name="Schuetz C."/>
            <person name="Walter U."/>
            <person name="Gambaryan S."/>
            <person name="Sickmann A."/>
        </authorList>
    </citation>
    <scope>IDENTIFICATION BY MASS SPECTROMETRY [LARGE SCALE ANALYSIS]</scope>
    <source>
        <tissue>Platelet</tissue>
    </source>
</reference>
<reference key="11">
    <citation type="journal article" date="2008" name="Mol. Cell">
        <title>Kinase-selective enrichment enables quantitative phosphoproteomics of the kinome across the cell cycle.</title>
        <authorList>
            <person name="Daub H."/>
            <person name="Olsen J.V."/>
            <person name="Bairlein M."/>
            <person name="Gnad F."/>
            <person name="Oppermann F.S."/>
            <person name="Korner R."/>
            <person name="Greff Z."/>
            <person name="Keri G."/>
            <person name="Stemmann O."/>
            <person name="Mann M."/>
        </authorList>
    </citation>
    <scope>IDENTIFICATION BY MASS SPECTROMETRY [LARGE SCALE ANALYSIS]</scope>
    <source>
        <tissue>Cervix carcinoma</tissue>
    </source>
</reference>
<reference key="12">
    <citation type="journal article" date="2008" name="Proc. Natl. Acad. Sci. U.S.A.">
        <title>A quantitative atlas of mitotic phosphorylation.</title>
        <authorList>
            <person name="Dephoure N."/>
            <person name="Zhou C."/>
            <person name="Villen J."/>
            <person name="Beausoleil S.A."/>
            <person name="Bakalarski C.E."/>
            <person name="Elledge S.J."/>
            <person name="Gygi S.P."/>
        </authorList>
    </citation>
    <scope>PHOSPHORYLATION [LARGE SCALE ANALYSIS] AT SER-48</scope>
    <scope>IDENTIFICATION BY MASS SPECTROMETRY [LARGE SCALE ANALYSIS]</scope>
    <source>
        <tissue>Cervix carcinoma</tissue>
    </source>
</reference>
<reference key="13">
    <citation type="journal article" date="2009" name="Cell">
        <title>Evolutionary divergence of enzymatic mechanisms for posttranslational polyglycylation.</title>
        <authorList>
            <person name="Rogowski K."/>
            <person name="Juge F."/>
            <person name="van Dijk J."/>
            <person name="Wloga D."/>
            <person name="Strub J.-M."/>
            <person name="Levilliers N."/>
            <person name="Thomas D."/>
            <person name="Bre M.-H."/>
            <person name="Van Dorsselaer A."/>
            <person name="Gaertig J."/>
            <person name="Janke C."/>
        </authorList>
    </citation>
    <scope>GLYCYLATION</scope>
</reference>
<reference key="14">
    <citation type="journal article" date="2011" name="BMC Syst. Biol.">
        <title>Initial characterization of the human central proteome.</title>
        <authorList>
            <person name="Burkard T.R."/>
            <person name="Planyavsky M."/>
            <person name="Kaupe I."/>
            <person name="Breitwieser F.P."/>
            <person name="Buerckstuemmer T."/>
            <person name="Bennett K.L."/>
            <person name="Superti-Furga G."/>
            <person name="Colinge J."/>
        </authorList>
    </citation>
    <scope>IDENTIFICATION BY MASS SPECTROMETRY [LARGE SCALE ANALYSIS]</scope>
</reference>
<reference key="15">
    <citation type="journal article" date="2013" name="J. Proteome Res.">
        <title>Toward a comprehensive characterization of a human cancer cell phosphoproteome.</title>
        <authorList>
            <person name="Zhou H."/>
            <person name="Di Palma S."/>
            <person name="Preisinger C."/>
            <person name="Peng M."/>
            <person name="Polat A.N."/>
            <person name="Heck A.J."/>
            <person name="Mohammed S."/>
        </authorList>
    </citation>
    <scope>IDENTIFICATION BY MASS SPECTROMETRY [LARGE SCALE ANALYSIS]</scope>
    <source>
        <tissue>Cervix carcinoma</tissue>
        <tissue>Erythroleukemia</tissue>
    </source>
</reference>
<reference key="16">
    <citation type="journal article" date="2014" name="Cell">
        <title>Molecular basis for age-dependent microtubule acetylation by tubulin acetyltransferase.</title>
        <authorList>
            <person name="Szyk A."/>
            <person name="Deaconescu A.M."/>
            <person name="Spector J."/>
            <person name="Goodman B."/>
            <person name="Valenstein M.L."/>
            <person name="Ziolkowska N.E."/>
            <person name="Kormendi V."/>
            <person name="Grigorieff N."/>
            <person name="Roll-Mecak A."/>
        </authorList>
    </citation>
    <scope>ACETYLATION AT LYS-40</scope>
</reference>
<reference key="17">
    <citation type="journal article" date="2014" name="J. Proteomics">
        <title>An enzyme assisted RP-RPLC approach for in-depth analysis of human liver phosphoproteome.</title>
        <authorList>
            <person name="Bian Y."/>
            <person name="Song C."/>
            <person name="Cheng K."/>
            <person name="Dong M."/>
            <person name="Wang F."/>
            <person name="Huang J."/>
            <person name="Sun D."/>
            <person name="Wang L."/>
            <person name="Ye M."/>
            <person name="Zou H."/>
        </authorList>
    </citation>
    <scope>IDENTIFICATION BY MASS SPECTROMETRY [LARGE SCALE ANALYSIS]</scope>
    <source>
        <tissue>Liver</tissue>
    </source>
</reference>
<reference key="18">
    <citation type="journal article" date="2014" name="Neuron">
        <title>Exome-wide rare variant analysis identifies TUBA4A mutations associated with familial ALS.</title>
        <authorList>
            <consortium name="SLAGEN Consortium"/>
            <person name="Smith B.N."/>
            <person name="Ticozzi N."/>
            <person name="Fallini C."/>
            <person name="Gkazi A.S."/>
            <person name="Topp S."/>
            <person name="Kenna K.P."/>
            <person name="Scotter E.L."/>
            <person name="Kost J."/>
            <person name="Keagle P."/>
            <person name="Miller J.W."/>
            <person name="Calini D."/>
            <person name="Vance C."/>
            <person name="Danielson E.W."/>
            <person name="Troakes C."/>
            <person name="Tiloca C."/>
            <person name="Al-Sarraj S."/>
            <person name="Lewis E.A."/>
            <person name="King A."/>
            <person name="Colombrita C."/>
            <person name="Pensato V."/>
            <person name="Castellotti B."/>
            <person name="de Belleroche J."/>
            <person name="Baas F."/>
            <person name="ten Asbroek A.L."/>
            <person name="Sapp P.C."/>
            <person name="McKenna-Yasek D."/>
            <person name="McLaughlin R.L."/>
            <person name="Polak M."/>
            <person name="Asress S."/>
            <person name="Esteban-Perez J."/>
            <person name="Munoz-Blanco J.L."/>
            <person name="Simpson M."/>
            <person name="van Rheenen W."/>
            <person name="Diekstra F.P."/>
            <person name="Lauria G."/>
            <person name="Duga S."/>
            <person name="Corti S."/>
            <person name="Cereda C."/>
            <person name="Corrado L."/>
            <person name="Soraru G."/>
            <person name="Morrison K.E."/>
            <person name="Williams K.L."/>
            <person name="Nicholson G.A."/>
            <person name="Blair I.P."/>
            <person name="Dion P.A."/>
            <person name="Leblond C.S."/>
            <person name="Rouleau G.A."/>
            <person name="Hardiman O."/>
            <person name="Veldink J.H."/>
            <person name="van den Berg L.H."/>
            <person name="Al-Chalabi A."/>
            <person name="Pall H."/>
            <person name="Shaw P.J."/>
            <person name="Turner M.R."/>
            <person name="Talbot K."/>
            <person name="Taroni F."/>
            <person name="Garcia-Redondo A."/>
            <person name="Wu Z."/>
            <person name="Glass J.D."/>
            <person name="Gellera C."/>
            <person name="Ratti A."/>
            <person name="Brown R.H. Jr."/>
            <person name="Silani V."/>
            <person name="Shaw C.E."/>
            <person name="Landers J.E."/>
        </authorList>
    </citation>
    <scope>INVOLVEMENT IN ALS22</scope>
    <scope>VARIANTS ALS22 PRO-145; CYS-215; CYS-320; HIS-320 AND THR-383</scope>
    <scope>CHARACTERIZATION OF VARIANTS ALS22 CYS-215; CYS-320; HIS-320 AND THR-383</scope>
</reference>
<reference key="19">
    <citation type="journal article" date="2015" name="Proteomics">
        <title>N-terminome analysis of the human mitochondrial proteome.</title>
        <authorList>
            <person name="Vaca Jacome A.S."/>
            <person name="Rabilloud T."/>
            <person name="Schaeffer-Reiss C."/>
            <person name="Rompais M."/>
            <person name="Ayoub D."/>
            <person name="Lane L."/>
            <person name="Bairoch A."/>
            <person name="Van Dorsselaer A."/>
            <person name="Carapito C."/>
        </authorList>
    </citation>
    <scope>IDENTIFICATION BY MASS SPECTROMETRY [LARGE SCALE ANALYSIS]</scope>
</reference>
<reference key="20">
    <citation type="journal article" date="2016" name="Cell">
        <title>Graded control of microtubule severing by tubulin glutamylation.</title>
        <authorList>
            <person name="Valenstein M.L."/>
            <person name="Roll-Mecak A."/>
        </authorList>
    </citation>
    <scope>GLUTAMYLATION</scope>
</reference>
<reference key="21">
    <citation type="journal article" date="2022" name="Science">
        <title>Posttranslational modification of microtubules by the MATCAP detyrosinase.</title>
        <authorList>
            <person name="Landskron L."/>
            <person name="Bak J."/>
            <person name="Adamopoulos A."/>
            <person name="Kaplani K."/>
            <person name="Moraiti M."/>
            <person name="van den Hengel L.G."/>
            <person name="Song J.Y."/>
            <person name="Bleijerveld O.B."/>
            <person name="Nieuwenhuis J."/>
            <person name="Heidebrecht T."/>
            <person name="Henneman L."/>
            <person name="Moutin M.J."/>
            <person name="Barisic M."/>
            <person name="Taraviras S."/>
            <person name="Perrakis A."/>
            <person name="Brummelkamp T.R."/>
        </authorList>
    </citation>
    <scope>TYROSINATION</scope>
    <scope>DETYROSINATION</scope>
</reference>
<gene>
    <name type="primary">TUBA4A</name>
    <name type="synonym">TUBA1</name>
</gene>
<sequence length="448" mass="49924">MRECISVHVGQAGVQMGNACWELYCLEHGIQPDGQMPSDKTIGGGDDSFTTFFCETGAGKHVPRAVFVDLEPTVIDEIRNGPYRQLFHPEQLITGKEDAANNYARGHYTIGKEIIDPVLDRIRKLSDQCTGLQGFLVFHSFGGGTGSGFTSLLMERLSVDYGKKSKLEFSIYPAPQVSTAVVEPYNSILTTHTTLEHSDCAFMVDNEAIYDICRRNLDIERPTYTNLNRLISQIVSSITASLRFDGALNVDLTEFQTNLVPYPRIHFPLATYAPVISAEKAYHEQLSVAEITNACFEPANQMVKCDPRHGKYMACCLLYRGDVVPKDVNAAIAAIKTKRSIQFVDWCPTGFKVGINYQPPTVVPGGDLAKVQRAVCMLSNTTAIAEAWARLDHKFDLMYAKRAFVHWYVGEGMEEGEFSEAREDMAALEKDYEEVGIDSYEDEDEGEE</sequence>
<feature type="chain" id="PRO_0000048106" description="Tubulin alpha-4A chain">
    <location>
        <begin position="1"/>
        <end position="448"/>
    </location>
</feature>
<feature type="short sequence motif" description="MREC motif" evidence="2">
    <location>
        <begin position="1"/>
        <end position="4"/>
    </location>
</feature>
<feature type="active site" evidence="2">
    <location>
        <position position="254"/>
    </location>
</feature>
<feature type="binding site" evidence="2">
    <location>
        <position position="11"/>
    </location>
    <ligand>
        <name>GTP</name>
        <dbReference type="ChEBI" id="CHEBI:37565"/>
    </ligand>
</feature>
<feature type="binding site" evidence="2">
    <location>
        <position position="71"/>
    </location>
    <ligand>
        <name>GTP</name>
        <dbReference type="ChEBI" id="CHEBI:37565"/>
    </ligand>
</feature>
<feature type="binding site" evidence="2">
    <location>
        <position position="71"/>
    </location>
    <ligand>
        <name>Mg(2+)</name>
        <dbReference type="ChEBI" id="CHEBI:18420"/>
    </ligand>
</feature>
<feature type="binding site" evidence="2">
    <location>
        <position position="140"/>
    </location>
    <ligand>
        <name>GTP</name>
        <dbReference type="ChEBI" id="CHEBI:37565"/>
    </ligand>
</feature>
<feature type="binding site" evidence="2">
    <location>
        <position position="144"/>
    </location>
    <ligand>
        <name>GTP</name>
        <dbReference type="ChEBI" id="CHEBI:37565"/>
    </ligand>
</feature>
<feature type="binding site" evidence="2">
    <location>
        <position position="145"/>
    </location>
    <ligand>
        <name>GTP</name>
        <dbReference type="ChEBI" id="CHEBI:37565"/>
    </ligand>
</feature>
<feature type="binding site" evidence="2">
    <location>
        <position position="179"/>
    </location>
    <ligand>
        <name>GTP</name>
        <dbReference type="ChEBI" id="CHEBI:37565"/>
    </ligand>
</feature>
<feature type="binding site" evidence="2">
    <location>
        <position position="206"/>
    </location>
    <ligand>
        <name>GTP</name>
        <dbReference type="ChEBI" id="CHEBI:37565"/>
    </ligand>
</feature>
<feature type="binding site" evidence="2">
    <location>
        <position position="228"/>
    </location>
    <ligand>
        <name>GTP</name>
        <dbReference type="ChEBI" id="CHEBI:37565"/>
    </ligand>
</feature>
<feature type="modified residue" description="N6-acetyllysine" evidence="7">
    <location>
        <position position="40"/>
    </location>
</feature>
<feature type="modified residue" description="Phosphoserine" evidence="14">
    <location>
        <position position="48"/>
    </location>
</feature>
<feature type="modified residue" description="3'-nitrotyrosine" evidence="3">
    <location>
        <position position="83"/>
    </location>
</feature>
<feature type="modified residue" description="Phosphotyrosine" evidence="6">
    <location>
        <position position="432"/>
    </location>
</feature>
<feature type="modified residue" description="Phosphoserine" evidence="5">
    <location>
        <position position="439"/>
    </location>
</feature>
<feature type="splice variant" id="VSP_055194" description="In isoform 2." evidence="11">
    <location>
        <begin position="1"/>
        <end position="15"/>
    </location>
</feature>
<feature type="sequence variant" id="VAR_072714" description="In ALS22; dbSNP:rs730880029." evidence="8">
    <original>T</original>
    <variation>P</variation>
    <location>
        <position position="145"/>
    </location>
</feature>
<feature type="sequence variant" id="VAR_072715" description="In ALS22; displays significantly different distribution in terms of incorporation into microtubules; dbSNP:rs730880028." evidence="8">
    <original>R</original>
    <variation>C</variation>
    <location>
        <position position="215"/>
    </location>
</feature>
<feature type="sequence variant" id="VAR_072716" description="In ALS22; displays significantly lower levels of dimer assembly; dbSNP:rs730880025." evidence="8">
    <original>R</original>
    <variation>C</variation>
    <location>
        <position position="320"/>
    </location>
</feature>
<feature type="sequence variant" id="VAR_072717" description="In ALS22; displays significantly lower levels of dimer assembly; dbSNP:rs730880026." evidence="8">
    <original>R</original>
    <variation>H</variation>
    <location>
        <position position="320"/>
    </location>
</feature>
<feature type="sequence variant" id="VAR_072718" description="In ALS22; displays significantly different distribution in terms of incorporation into microtubules; destabilizes the microtubule network; dbSNP:rs368743618." evidence="8">
    <original>A</original>
    <variation>T</variation>
    <location>
        <position position="383"/>
    </location>
</feature>
<evidence type="ECO:0000250" key="1">
    <source>
        <dbReference type="UniProtKB" id="P07437"/>
    </source>
</evidence>
<evidence type="ECO:0000250" key="2">
    <source>
        <dbReference type="UniProtKB" id="P68363"/>
    </source>
</evidence>
<evidence type="ECO:0000250" key="3">
    <source>
        <dbReference type="UniProtKB" id="P68368"/>
    </source>
</evidence>
<evidence type="ECO:0000250" key="4">
    <source>
        <dbReference type="UniProtKB" id="P99024"/>
    </source>
</evidence>
<evidence type="ECO:0000250" key="5">
    <source>
        <dbReference type="UniProtKB" id="Q5XIF6"/>
    </source>
</evidence>
<evidence type="ECO:0000250" key="6">
    <source>
        <dbReference type="UniProtKB" id="Q9BQE3"/>
    </source>
</evidence>
<evidence type="ECO:0000269" key="7">
    <source>
    </source>
</evidence>
<evidence type="ECO:0000269" key="8">
    <source>
    </source>
</evidence>
<evidence type="ECO:0000269" key="9">
    <source>
    </source>
</evidence>
<evidence type="ECO:0000269" key="10">
    <source>
    </source>
</evidence>
<evidence type="ECO:0000303" key="11">
    <source>
    </source>
</evidence>
<evidence type="ECO:0000305" key="12"/>
<evidence type="ECO:0000305" key="13">
    <source>
    </source>
</evidence>
<evidence type="ECO:0007744" key="14">
    <source>
    </source>
</evidence>
<dbReference type="EC" id="3.6.5.-" evidence="2"/>
<dbReference type="EMBL" id="X06956">
    <property type="protein sequence ID" value="CAA30026.1"/>
    <property type="molecule type" value="Genomic_DNA"/>
</dbReference>
<dbReference type="EMBL" id="BT006731">
    <property type="protein sequence ID" value="AAP35377.1"/>
    <property type="molecule type" value="mRNA"/>
</dbReference>
<dbReference type="EMBL" id="AK054731">
    <property type="protein sequence ID" value="BAG51418.1"/>
    <property type="molecule type" value="mRNA"/>
</dbReference>
<dbReference type="EMBL" id="AK299958">
    <property type="protein sequence ID" value="BAH13182.1"/>
    <property type="molecule type" value="mRNA"/>
</dbReference>
<dbReference type="EMBL" id="AY895018">
    <property type="protein sequence ID" value="AAW65371.1"/>
    <property type="molecule type" value="Genomic_DNA"/>
</dbReference>
<dbReference type="EMBL" id="AC068946">
    <property type="status" value="NOT_ANNOTATED_CDS"/>
    <property type="molecule type" value="Genomic_DNA"/>
</dbReference>
<dbReference type="EMBL" id="AC114803">
    <property type="status" value="NOT_ANNOTATED_CDS"/>
    <property type="molecule type" value="Genomic_DNA"/>
</dbReference>
<dbReference type="EMBL" id="CH471063">
    <property type="protein sequence ID" value="EAW70718.1"/>
    <property type="molecule type" value="Genomic_DNA"/>
</dbReference>
<dbReference type="EMBL" id="CH471063">
    <property type="protein sequence ID" value="EAW70719.1"/>
    <property type="molecule type" value="Genomic_DNA"/>
</dbReference>
<dbReference type="EMBL" id="BC009238">
    <property type="protein sequence ID" value="AAH09238.1"/>
    <property type="molecule type" value="mRNA"/>
</dbReference>
<dbReference type="CCDS" id="CCDS2438.1">
    <molecule id="P68366-1"/>
</dbReference>
<dbReference type="CCDS" id="CCDS63131.1">
    <molecule id="P68366-2"/>
</dbReference>
<dbReference type="PIR" id="A25873">
    <property type="entry name" value="A25873"/>
</dbReference>
<dbReference type="RefSeq" id="NP_001265481.1">
    <molecule id="P68366-2"/>
    <property type="nucleotide sequence ID" value="NM_001278552.2"/>
</dbReference>
<dbReference type="RefSeq" id="NP_005991.1">
    <molecule id="P68366-1"/>
    <property type="nucleotide sequence ID" value="NM_006000.3"/>
</dbReference>
<dbReference type="SMR" id="P68366"/>
<dbReference type="BioGRID" id="113128">
    <property type="interactions" value="499"/>
</dbReference>
<dbReference type="CORUM" id="P68366"/>
<dbReference type="FunCoup" id="P68366">
    <property type="interactions" value="2621"/>
</dbReference>
<dbReference type="IntAct" id="P68366">
    <property type="interactions" value="315"/>
</dbReference>
<dbReference type="MINT" id="P68366"/>
<dbReference type="STRING" id="9606.ENSP00000248437"/>
<dbReference type="BindingDB" id="P68366"/>
<dbReference type="ChEMBL" id="CHEMBL2070"/>
<dbReference type="DrugBank" id="DB05147">
    <property type="generic name" value="CYT997"/>
</dbReference>
<dbReference type="DrugBank" id="DB01873">
    <property type="generic name" value="Epothilone D"/>
</dbReference>
<dbReference type="DrugBank" id="DB03010">
    <property type="generic name" value="Patupilone"/>
</dbReference>
<dbReference type="DrugBank" id="DB12695">
    <property type="generic name" value="Phenethyl Isothiocyanate"/>
</dbReference>
<dbReference type="DrugBank" id="DB01179">
    <property type="generic name" value="Podofilox"/>
</dbReference>
<dbReference type="DrugBank" id="DB00541">
    <property type="generic name" value="Vincristine"/>
</dbReference>
<dbReference type="DrugCentral" id="P68366"/>
<dbReference type="GlyCosmos" id="P68366">
    <property type="glycosylation" value="1 site, 2 glycans"/>
</dbReference>
<dbReference type="GlyGen" id="P68366">
    <property type="glycosylation" value="1 site, 2 O-linked glycans (1 site)"/>
</dbReference>
<dbReference type="iPTMnet" id="P68366"/>
<dbReference type="MetOSite" id="P68366"/>
<dbReference type="PhosphoSitePlus" id="P68366"/>
<dbReference type="SwissPalm" id="P68366"/>
<dbReference type="BioMuta" id="TUBA4A"/>
<dbReference type="DMDM" id="55977476"/>
<dbReference type="OGP" id="P05215"/>
<dbReference type="CPTAC" id="CPTAC-597"/>
<dbReference type="CPTAC" id="CPTAC-598"/>
<dbReference type="jPOST" id="P68366"/>
<dbReference type="MassIVE" id="P68366"/>
<dbReference type="PaxDb" id="9606-ENSP00000248437"/>
<dbReference type="PeptideAtlas" id="P68366"/>
<dbReference type="PRIDE" id="P68366"/>
<dbReference type="ProteomicsDB" id="2093"/>
<dbReference type="ProteomicsDB" id="57534">
    <molecule id="P68366-1"/>
</dbReference>
<dbReference type="Pumba" id="P68366"/>
<dbReference type="Antibodypedia" id="3138">
    <property type="antibodies" value="509 antibodies from 38 providers"/>
</dbReference>
<dbReference type="DNASU" id="7277"/>
<dbReference type="Ensembl" id="ENST00000248437.9">
    <molecule id="P68366-1"/>
    <property type="protein sequence ID" value="ENSP00000248437.4"/>
    <property type="gene ID" value="ENSG00000127824.15"/>
</dbReference>
<dbReference type="Ensembl" id="ENST00000392088.6">
    <molecule id="P68366-2"/>
    <property type="protein sequence ID" value="ENSP00000375938.2"/>
    <property type="gene ID" value="ENSG00000127824.15"/>
</dbReference>
<dbReference type="GeneID" id="7277"/>
<dbReference type="KEGG" id="hsa:7277"/>
<dbReference type="MANE-Select" id="ENST00000248437.9">
    <property type="protein sequence ID" value="ENSP00000248437.4"/>
    <property type="RefSeq nucleotide sequence ID" value="NM_006000.3"/>
    <property type="RefSeq protein sequence ID" value="NP_005991.1"/>
</dbReference>
<dbReference type="UCSC" id="uc002vkt.3">
    <molecule id="P68366-1"/>
    <property type="organism name" value="human"/>
</dbReference>
<dbReference type="AGR" id="HGNC:12407"/>
<dbReference type="CTD" id="7277"/>
<dbReference type="DisGeNET" id="7277"/>
<dbReference type="GeneCards" id="TUBA4A"/>
<dbReference type="HGNC" id="HGNC:12407">
    <property type="gene designation" value="TUBA4A"/>
</dbReference>
<dbReference type="HPA" id="ENSG00000127824">
    <property type="expression patterns" value="Tissue enhanced (skeletal muscle, tongue)"/>
</dbReference>
<dbReference type="MalaCards" id="TUBA4A"/>
<dbReference type="MIM" id="191110">
    <property type="type" value="gene"/>
</dbReference>
<dbReference type="MIM" id="616208">
    <property type="type" value="phenotype"/>
</dbReference>
<dbReference type="neXtProt" id="NX_P68366"/>
<dbReference type="OpenTargets" id="ENSG00000127824"/>
<dbReference type="PharmGKB" id="PA162407391"/>
<dbReference type="VEuPathDB" id="HostDB:ENSG00000127824"/>
<dbReference type="eggNOG" id="KOG1376">
    <property type="taxonomic scope" value="Eukaryota"/>
</dbReference>
<dbReference type="GeneTree" id="ENSGT00950000183165"/>
<dbReference type="HOGENOM" id="CLU_015718_0_0_1"/>
<dbReference type="InParanoid" id="P68366"/>
<dbReference type="OMA" id="RRVTDNC"/>
<dbReference type="OrthoDB" id="1844at2759"/>
<dbReference type="PAN-GO" id="P68366">
    <property type="GO annotations" value="6 GO annotations based on evolutionary models"/>
</dbReference>
<dbReference type="PhylomeDB" id="P68366"/>
<dbReference type="TreeFam" id="TF300314"/>
<dbReference type="PathwayCommons" id="P68366"/>
<dbReference type="Reactome" id="R-HSA-114608">
    <property type="pathway name" value="Platelet degranulation"/>
</dbReference>
<dbReference type="Reactome" id="R-HSA-1445148">
    <property type="pathway name" value="Translocation of SLC2A4 (GLUT4) to the plasma membrane"/>
</dbReference>
<dbReference type="Reactome" id="R-HSA-190840">
    <property type="pathway name" value="Microtubule-dependent trafficking of connexons from Golgi to the plasma membrane"/>
</dbReference>
<dbReference type="Reactome" id="R-HSA-190861">
    <property type="pathway name" value="Gap junction assembly"/>
</dbReference>
<dbReference type="Reactome" id="R-HSA-2132295">
    <property type="pathway name" value="MHC class II antigen presentation"/>
</dbReference>
<dbReference type="Reactome" id="R-HSA-2467813">
    <property type="pathway name" value="Separation of Sister Chromatids"/>
</dbReference>
<dbReference type="Reactome" id="R-HSA-2500257">
    <property type="pathway name" value="Resolution of Sister Chromatid Cohesion"/>
</dbReference>
<dbReference type="Reactome" id="R-HSA-2565942">
    <property type="pathway name" value="Regulation of PLK1 Activity at G2/M Transition"/>
</dbReference>
<dbReference type="Reactome" id="R-HSA-3371497">
    <property type="pathway name" value="HSP90 chaperone cycle for steroid hormone receptors (SHR) in the presence of ligand"/>
</dbReference>
<dbReference type="Reactome" id="R-HSA-380259">
    <property type="pathway name" value="Loss of Nlp from mitotic centrosomes"/>
</dbReference>
<dbReference type="Reactome" id="R-HSA-380270">
    <property type="pathway name" value="Recruitment of mitotic centrosome proteins and complexes"/>
</dbReference>
<dbReference type="Reactome" id="R-HSA-380284">
    <property type="pathway name" value="Loss of proteins required for interphase microtubule organization from the centrosome"/>
</dbReference>
<dbReference type="Reactome" id="R-HSA-380320">
    <property type="pathway name" value="Recruitment of NuMA to mitotic centrosomes"/>
</dbReference>
<dbReference type="Reactome" id="R-HSA-389957">
    <property type="pathway name" value="Prefoldin mediated transfer of substrate to CCT/TriC"/>
</dbReference>
<dbReference type="Reactome" id="R-HSA-389960">
    <property type="pathway name" value="Formation of tubulin folding intermediates by CCT/TriC"/>
</dbReference>
<dbReference type="Reactome" id="R-HSA-389977">
    <property type="pathway name" value="Post-chaperonin tubulin folding pathway"/>
</dbReference>
<dbReference type="Reactome" id="R-HSA-437239">
    <property type="pathway name" value="Recycling pathway of L1"/>
</dbReference>
<dbReference type="Reactome" id="R-HSA-5610787">
    <property type="pathway name" value="Hedgehog 'off' state"/>
</dbReference>
<dbReference type="Reactome" id="R-HSA-5617833">
    <property type="pathway name" value="Cilium Assembly"/>
</dbReference>
<dbReference type="Reactome" id="R-HSA-5620912">
    <property type="pathway name" value="Anchoring of the basal body to the plasma membrane"/>
</dbReference>
<dbReference type="Reactome" id="R-HSA-5620924">
    <property type="pathway name" value="Intraflagellar transport"/>
</dbReference>
<dbReference type="Reactome" id="R-HSA-5626467">
    <property type="pathway name" value="RHO GTPases activate IQGAPs"/>
</dbReference>
<dbReference type="Reactome" id="R-HSA-5663220">
    <property type="pathway name" value="RHO GTPases Activate Formins"/>
</dbReference>
<dbReference type="Reactome" id="R-HSA-6807878">
    <property type="pathway name" value="COPI-mediated anterograde transport"/>
</dbReference>
<dbReference type="Reactome" id="R-HSA-6811434">
    <property type="pathway name" value="COPI-dependent Golgi-to-ER retrograde traffic"/>
</dbReference>
<dbReference type="Reactome" id="R-HSA-6811436">
    <property type="pathway name" value="COPI-independent Golgi-to-ER retrograde traffic"/>
</dbReference>
<dbReference type="Reactome" id="R-HSA-68877">
    <property type="pathway name" value="Mitotic Prometaphase"/>
</dbReference>
<dbReference type="Reactome" id="R-HSA-8852276">
    <property type="pathway name" value="The role of GTSE1 in G2/M progression after G2 checkpoint"/>
</dbReference>
<dbReference type="Reactome" id="R-HSA-8854518">
    <property type="pathway name" value="AURKA Activation by TPX2"/>
</dbReference>
<dbReference type="Reactome" id="R-HSA-8955332">
    <property type="pathway name" value="Carboxyterminal post-translational modifications of tubulin"/>
</dbReference>
<dbReference type="Reactome" id="R-HSA-9609690">
    <property type="pathway name" value="HCMV Early Events"/>
</dbReference>
<dbReference type="Reactome" id="R-HSA-9609736">
    <property type="pathway name" value="Assembly and cell surface presentation of NMDA receptors"/>
</dbReference>
<dbReference type="Reactome" id="R-HSA-9619483">
    <property type="pathway name" value="Activation of AMPK downstream of NMDARs"/>
</dbReference>
<dbReference type="Reactome" id="R-HSA-9646399">
    <property type="pathway name" value="Aggrephagy"/>
</dbReference>
<dbReference type="Reactome" id="R-HSA-9648025">
    <property type="pathway name" value="EML4 and NUDC in mitotic spindle formation"/>
</dbReference>
<dbReference type="Reactome" id="R-HSA-9668328">
    <property type="pathway name" value="Sealing of the nuclear envelope (NE) by ESCRT-III"/>
</dbReference>
<dbReference type="Reactome" id="R-HSA-983189">
    <property type="pathway name" value="Kinesins"/>
</dbReference>
<dbReference type="Reactome" id="R-HSA-9833482">
    <property type="pathway name" value="PKR-mediated signaling"/>
</dbReference>
<dbReference type="SignaLink" id="P68366"/>
<dbReference type="SIGNOR" id="P68366"/>
<dbReference type="BioGRID-ORCS" id="7277">
    <property type="hits" value="28 hits in 1182 CRISPR screens"/>
</dbReference>
<dbReference type="CD-CODE" id="8C2F96ED">
    <property type="entry name" value="Centrosome"/>
</dbReference>
<dbReference type="CD-CODE" id="91857CE7">
    <property type="entry name" value="Nucleolus"/>
</dbReference>
<dbReference type="CD-CODE" id="DEE660B4">
    <property type="entry name" value="Stress granule"/>
</dbReference>
<dbReference type="CD-CODE" id="FB4E32DD">
    <property type="entry name" value="Presynaptic clusters and postsynaptic densities"/>
</dbReference>
<dbReference type="ChiTaRS" id="TUBA4A">
    <property type="organism name" value="human"/>
</dbReference>
<dbReference type="GeneWiki" id="TUBA4A"/>
<dbReference type="GenomeRNAi" id="7277"/>
<dbReference type="Pharos" id="P68366">
    <property type="development level" value="Tchem"/>
</dbReference>
<dbReference type="PRO" id="PR:P68366"/>
<dbReference type="Proteomes" id="UP000005640">
    <property type="component" value="Chromosome 2"/>
</dbReference>
<dbReference type="RNAct" id="P68366">
    <property type="molecule type" value="protein"/>
</dbReference>
<dbReference type="Bgee" id="ENSG00000127824">
    <property type="expression patterns" value="Expressed in gingival epithelium and 205 other cell types or tissues"/>
</dbReference>
<dbReference type="ExpressionAtlas" id="P68366">
    <property type="expression patterns" value="baseline and differential"/>
</dbReference>
<dbReference type="GO" id="GO:0005929">
    <property type="term" value="C:cilium"/>
    <property type="evidence" value="ECO:0000314"/>
    <property type="project" value="HPA"/>
</dbReference>
<dbReference type="GO" id="GO:0005737">
    <property type="term" value="C:cytoplasm"/>
    <property type="evidence" value="ECO:0000318"/>
    <property type="project" value="GO_Central"/>
</dbReference>
<dbReference type="GO" id="GO:0005856">
    <property type="term" value="C:cytoskeleton"/>
    <property type="evidence" value="ECO:0000314"/>
    <property type="project" value="ARUK-UCL"/>
</dbReference>
<dbReference type="GO" id="GO:0005829">
    <property type="term" value="C:cytosol"/>
    <property type="evidence" value="ECO:0000304"/>
    <property type="project" value="Reactome"/>
</dbReference>
<dbReference type="GO" id="GO:0070062">
    <property type="term" value="C:extracellular exosome"/>
    <property type="evidence" value="ECO:0007005"/>
    <property type="project" value="UniProtKB"/>
</dbReference>
<dbReference type="GO" id="GO:0005576">
    <property type="term" value="C:extracellular region"/>
    <property type="evidence" value="ECO:0000304"/>
    <property type="project" value="Reactome"/>
</dbReference>
<dbReference type="GO" id="GO:0005874">
    <property type="term" value="C:microtubule"/>
    <property type="evidence" value="ECO:0000314"/>
    <property type="project" value="UniProtKB"/>
</dbReference>
<dbReference type="GO" id="GO:0015630">
    <property type="term" value="C:microtubule cytoskeleton"/>
    <property type="evidence" value="ECO:0000314"/>
    <property type="project" value="HPA"/>
</dbReference>
<dbReference type="GO" id="GO:0005525">
    <property type="term" value="F:GTP binding"/>
    <property type="evidence" value="ECO:0000318"/>
    <property type="project" value="GO_Central"/>
</dbReference>
<dbReference type="GO" id="GO:0016787">
    <property type="term" value="F:hydrolase activity"/>
    <property type="evidence" value="ECO:0007669"/>
    <property type="project" value="UniProtKB-KW"/>
</dbReference>
<dbReference type="GO" id="GO:0046872">
    <property type="term" value="F:metal ion binding"/>
    <property type="evidence" value="ECO:0007669"/>
    <property type="project" value="UniProtKB-KW"/>
</dbReference>
<dbReference type="GO" id="GO:0019901">
    <property type="term" value="F:protein kinase binding"/>
    <property type="evidence" value="ECO:0000353"/>
    <property type="project" value="ARUK-UCL"/>
</dbReference>
<dbReference type="GO" id="GO:0005200">
    <property type="term" value="F:structural constituent of cytoskeleton"/>
    <property type="evidence" value="ECO:0000318"/>
    <property type="project" value="GO_Central"/>
</dbReference>
<dbReference type="GO" id="GO:0000226">
    <property type="term" value="P:microtubule cytoskeleton organization"/>
    <property type="evidence" value="ECO:0000318"/>
    <property type="project" value="GO_Central"/>
</dbReference>
<dbReference type="GO" id="GO:0000278">
    <property type="term" value="P:mitotic cell cycle"/>
    <property type="evidence" value="ECO:0000318"/>
    <property type="project" value="GO_Central"/>
</dbReference>
<dbReference type="CDD" id="cd02186">
    <property type="entry name" value="alpha_tubulin"/>
    <property type="match status" value="1"/>
</dbReference>
<dbReference type="FunFam" id="1.10.287.600:FF:000005">
    <property type="entry name" value="Tubulin alpha chain"/>
    <property type="match status" value="1"/>
</dbReference>
<dbReference type="FunFam" id="3.30.1330.20:FF:000001">
    <property type="entry name" value="Tubulin alpha chain"/>
    <property type="match status" value="1"/>
</dbReference>
<dbReference type="FunFam" id="3.40.50.1440:FF:000002">
    <property type="entry name" value="Tubulin alpha chain"/>
    <property type="match status" value="1"/>
</dbReference>
<dbReference type="Gene3D" id="1.10.287.600">
    <property type="entry name" value="Helix hairpin bin"/>
    <property type="match status" value="1"/>
</dbReference>
<dbReference type="Gene3D" id="3.30.1330.20">
    <property type="entry name" value="Tubulin/FtsZ, C-terminal domain"/>
    <property type="match status" value="1"/>
</dbReference>
<dbReference type="Gene3D" id="3.40.50.1440">
    <property type="entry name" value="Tubulin/FtsZ, GTPase domain"/>
    <property type="match status" value="1"/>
</dbReference>
<dbReference type="InterPro" id="IPR002452">
    <property type="entry name" value="Alpha_tubulin"/>
</dbReference>
<dbReference type="InterPro" id="IPR008280">
    <property type="entry name" value="Tub_FtsZ_C"/>
</dbReference>
<dbReference type="InterPro" id="IPR000217">
    <property type="entry name" value="Tubulin"/>
</dbReference>
<dbReference type="InterPro" id="IPR037103">
    <property type="entry name" value="Tubulin/FtsZ-like_C"/>
</dbReference>
<dbReference type="InterPro" id="IPR018316">
    <property type="entry name" value="Tubulin/FtsZ_2-layer-sand-dom"/>
</dbReference>
<dbReference type="InterPro" id="IPR036525">
    <property type="entry name" value="Tubulin/FtsZ_GTPase_sf"/>
</dbReference>
<dbReference type="InterPro" id="IPR023123">
    <property type="entry name" value="Tubulin_C"/>
</dbReference>
<dbReference type="InterPro" id="IPR017975">
    <property type="entry name" value="Tubulin_CS"/>
</dbReference>
<dbReference type="InterPro" id="IPR003008">
    <property type="entry name" value="Tubulin_FtsZ_GTPase"/>
</dbReference>
<dbReference type="PANTHER" id="PTHR11588">
    <property type="entry name" value="TUBULIN"/>
    <property type="match status" value="1"/>
</dbReference>
<dbReference type="Pfam" id="PF00091">
    <property type="entry name" value="Tubulin"/>
    <property type="match status" value="1"/>
</dbReference>
<dbReference type="Pfam" id="PF03953">
    <property type="entry name" value="Tubulin_C"/>
    <property type="match status" value="1"/>
</dbReference>
<dbReference type="PRINTS" id="PR01162">
    <property type="entry name" value="ALPHATUBULIN"/>
</dbReference>
<dbReference type="PRINTS" id="PR01161">
    <property type="entry name" value="TUBULIN"/>
</dbReference>
<dbReference type="SMART" id="SM00864">
    <property type="entry name" value="Tubulin"/>
    <property type="match status" value="1"/>
</dbReference>
<dbReference type="SMART" id="SM00865">
    <property type="entry name" value="Tubulin_C"/>
    <property type="match status" value="1"/>
</dbReference>
<dbReference type="SUPFAM" id="SSF55307">
    <property type="entry name" value="Tubulin C-terminal domain-like"/>
    <property type="match status" value="1"/>
</dbReference>
<dbReference type="SUPFAM" id="SSF52490">
    <property type="entry name" value="Tubulin nucleotide-binding domain-like"/>
    <property type="match status" value="1"/>
</dbReference>
<dbReference type="PROSITE" id="PS00227">
    <property type="entry name" value="TUBULIN"/>
    <property type="match status" value="1"/>
</dbReference>
<comment type="function">
    <text>Tubulin is the major constituent of microtubules, a cylinder consisting of laterally associated linear protofilaments composed of alpha- and beta-tubulin heterodimers. Microtubules grow by the addition of GTP-tubulin dimers to the microtubule end, where a stabilizing cap forms. Below the cap, tubulin dimers are in GDP-bound state, owing to GTPase activity of alpha-tubulin.</text>
</comment>
<comment type="catalytic activity">
    <reaction evidence="2">
        <text>GTP + H2O = GDP + phosphate + H(+)</text>
        <dbReference type="Rhea" id="RHEA:19669"/>
        <dbReference type="ChEBI" id="CHEBI:15377"/>
        <dbReference type="ChEBI" id="CHEBI:15378"/>
        <dbReference type="ChEBI" id="CHEBI:37565"/>
        <dbReference type="ChEBI" id="CHEBI:43474"/>
        <dbReference type="ChEBI" id="CHEBI:58189"/>
    </reaction>
    <physiologicalReaction direction="left-to-right" evidence="2">
        <dbReference type="Rhea" id="RHEA:19670"/>
    </physiologicalReaction>
</comment>
<comment type="cofactor">
    <cofactor evidence="2">
        <name>Mg(2+)</name>
        <dbReference type="ChEBI" id="CHEBI:18420"/>
    </cofactor>
</comment>
<comment type="subunit">
    <text evidence="3">Dimer of alpha and beta chains. A typical microtubule is a hollow water-filled tube with an outer diameter of 25 nm and an inner diameter of 15 nM. Alpha-beta heterodimers associate head-to-tail to form protofilaments running lengthwise along the microtubule wall with the beta-tubulin subunit facing the microtubule plus end conferring a structural polarity. Microtubules usually have 13 protofilaments but different protofilament numbers can be found in some organisms and specialized cells. Interacts with CFAP157 (By similarity).</text>
</comment>
<comment type="interaction">
    <interactant intactId="EBI-351772">
        <id>P68366</id>
    </interactant>
    <interactant intactId="EBI-77613">
        <id>P05067</id>
        <label>APP</label>
    </interactant>
    <organismsDiffer>false</organismsDiffer>
    <experiments>3</experiments>
</comment>
<comment type="interaction">
    <interactant intactId="EBI-351772">
        <id>P68366</id>
    </interactant>
    <interactant intactId="EBI-2683569">
        <id>P30622</id>
        <label>CLIP1</label>
    </interactant>
    <organismsDiffer>false</organismsDiffer>
    <experiments>3</experiments>
</comment>
<comment type="interaction">
    <interactant intactId="EBI-351772">
        <id>P68366</id>
    </interactant>
    <interactant intactId="EBI-2561090">
        <id>Q8NA72</id>
        <label>POC5</label>
    </interactant>
    <organismsDiffer>false</organismsDiffer>
    <experiments>5</experiments>
</comment>
<comment type="interaction">
    <interactant intactId="EBI-351772">
        <id>P68366</id>
    </interactant>
    <interactant intactId="EBI-764356">
        <id>Q99426</id>
        <label>TBCB</label>
    </interactant>
    <organismsDiffer>false</organismsDiffer>
    <experiments>2</experiments>
</comment>
<comment type="interaction">
    <interactant intactId="EBI-351772">
        <id>P68366</id>
    </interactant>
    <interactant intactId="EBI-11897462">
        <id>Q8N4U5</id>
        <label>TCP11L2</label>
    </interactant>
    <organismsDiffer>false</organismsDiffer>
    <experiments>6</experiments>
</comment>
<comment type="subcellular location">
    <subcellularLocation>
        <location>Cytoplasm</location>
        <location>Cytoskeleton</location>
    </subcellularLocation>
</comment>
<comment type="alternative products">
    <event type="alternative splicing"/>
    <isoform>
        <id>P68366-1</id>
        <name>1</name>
        <sequence type="displayed"/>
    </isoform>
    <isoform>
        <id>P68366-2</id>
        <name>2</name>
        <sequence type="described" ref="VSP_055194"/>
    </isoform>
</comment>
<comment type="domain">
    <text evidence="2">The MREC motif may be critical for tubulin autoregulation.</text>
</comment>
<comment type="PTM">
    <text evidence="4 9">Some glutamate residues at the C-terminus are polyglutamylated, resulting in polyglutamate chains on the gamma-carboxyl group (PubMed:26875866). Polyglutamylation plays a key role in microtubule severing by spastin (SPAST). SPAST preferentially recognizes and acts on microtubules decorated with short polyglutamate tails: severing activity by SPAST increases as the number of glutamates per tubulin rises from one to eight, but decreases beyond this glutamylation threshold (PubMed:26875866). Glutamylation is also involved in cilia motility (By similarity).</text>
</comment>
<comment type="PTM">
    <text evidence="1 13">Some glutamate residues at the C-terminus are monoglycylated but not polyglycylated due to the absence of functional TTLL10 in human. Monoglycylation is mainly limited to tubulin incorporated into cilia and flagella axonemes, which is required for their stability and maintenance. Flagella glycylation controls sperm motility. Both polyglutamylation and monoglycylation can coexist on the same protein on adjacent residues, and lowering glycylation levels increases polyglutamylation, and reciprocally.</text>
</comment>
<comment type="PTM">
    <text evidence="7">Acetylation of alpha chains at Lys-40 is located inside the microtubule lumen. This modification has been correlated with increased microtubule stability, intracellular transport and ciliary assembly.</text>
</comment>
<comment type="PTM">
    <text evidence="2">Methylation of alpha chains at Lys-40 is found in mitotic microtubules and is required for normal mitosis and cytokinesis contributing to genomic stability.</text>
</comment>
<comment type="PTM">
    <text evidence="10">Although this tubulin does not encode a C-terminal tyrosine, a C-terminal tyrosine can be added post-translationally by the tubulin tyrosine ligase (TTL) (PubMed:35482892). It can then undergo a detyrosination cycle by the tubulin tyrosine carboxypeptidase (MATCAP1/KIAA0895L) (PubMed:35482892).</text>
</comment>
<comment type="disease" evidence="8">
    <disease id="DI-04318">
        <name>Amyotrophic lateral sclerosis 22, with or without frontotemporal dementia</name>
        <acronym>ALS22</acronym>
        <description>A neurodegenerative disorder affecting upper motor neurons in the brain and lower motor neurons in the brain stem and spinal cord, resulting in fatal paralysis. Sensory abnormalities are absent. The pathologic hallmarks of the disease include pallor of the corticospinal tract due to loss of motor neurons, presence of ubiquitin-positive inclusions within surviving motor neurons, and deposition of pathologic aggregates. The etiology of amyotrophic lateral sclerosis is likely to be multifactorial, involving both genetic and environmental factors. The disease is inherited in 5-10% of the cases. Patients with ALS22 may develop frontotemporal dementia.</description>
        <dbReference type="MIM" id="616208"/>
    </disease>
    <text>The disease is caused by variants affecting the gene represented in this entry.</text>
</comment>
<comment type="similarity">
    <text evidence="12">Belongs to the tubulin family.</text>
</comment>
<comment type="online information" name="Wikipedia">
    <link uri="https://en.wikipedia.org/wiki/Tubulin"/>
    <text>Tubulin entry</text>
</comment>
<accession>P68366</accession>
<accession>A8MUB1</accession>
<accession>B3KNQ6</accession>
<accession>P05215</accession>
<name>TBA4A_HUMAN</name>